<gene>
    <name type="primary">CFT1</name>
    <name type="ordered locus">CAALFM_C402430WA</name>
    <name type="ORF">CaO19.10274</name>
    <name type="ORF">CaO19.10275</name>
    <name type="ORF">CaO19.10276</name>
    <name type="ORF">CaO19.2760</name>
</gene>
<dbReference type="EMBL" id="CP017626">
    <property type="protein sequence ID" value="AOW29012.1"/>
    <property type="molecule type" value="Genomic_DNA"/>
</dbReference>
<dbReference type="RefSeq" id="XP_720510.2">
    <property type="nucleotide sequence ID" value="XM_715417.2"/>
</dbReference>
<dbReference type="SMR" id="Q5AFT3"/>
<dbReference type="FunCoup" id="Q5AFT3">
    <property type="interactions" value="1181"/>
</dbReference>
<dbReference type="STRING" id="237561.Q5AFT3"/>
<dbReference type="EnsemblFungi" id="C4_02430W_A-T">
    <property type="protein sequence ID" value="C4_02430W_A-T-p1"/>
    <property type="gene ID" value="C4_02430W_A"/>
</dbReference>
<dbReference type="GeneID" id="3637848"/>
<dbReference type="KEGG" id="cal:CAALFM_C402430WA"/>
<dbReference type="CGD" id="CAL0000179267">
    <property type="gene designation" value="orf19.10276"/>
</dbReference>
<dbReference type="VEuPathDB" id="FungiDB:C4_02430W_A"/>
<dbReference type="eggNOG" id="KOG1896">
    <property type="taxonomic scope" value="Eukaryota"/>
</dbReference>
<dbReference type="HOGENOM" id="CLU_002414_2_1_1"/>
<dbReference type="InParanoid" id="Q5AFT3"/>
<dbReference type="OrthoDB" id="6109at2759"/>
<dbReference type="PRO" id="PR:Q5AFT3"/>
<dbReference type="Proteomes" id="UP000000559">
    <property type="component" value="Chromosome 4"/>
</dbReference>
<dbReference type="GO" id="GO:0005847">
    <property type="term" value="C:mRNA cleavage and polyadenylation specificity factor complex"/>
    <property type="evidence" value="ECO:0000318"/>
    <property type="project" value="GO_Central"/>
</dbReference>
<dbReference type="GO" id="GO:0005634">
    <property type="term" value="C:nucleus"/>
    <property type="evidence" value="ECO:0000318"/>
    <property type="project" value="GO_Central"/>
</dbReference>
<dbReference type="GO" id="GO:0003723">
    <property type="term" value="F:RNA binding"/>
    <property type="evidence" value="ECO:0007669"/>
    <property type="project" value="UniProtKB-KW"/>
</dbReference>
<dbReference type="GO" id="GO:0006397">
    <property type="term" value="P:mRNA processing"/>
    <property type="evidence" value="ECO:0007669"/>
    <property type="project" value="UniProtKB-KW"/>
</dbReference>
<dbReference type="GO" id="GO:0009410">
    <property type="term" value="P:response to xenobiotic stimulus"/>
    <property type="evidence" value="ECO:0000315"/>
    <property type="project" value="CGD"/>
</dbReference>
<dbReference type="GO" id="GO:0006369">
    <property type="term" value="P:termination of RNA polymerase II transcription"/>
    <property type="evidence" value="ECO:0007669"/>
    <property type="project" value="EnsemblFungi"/>
</dbReference>
<dbReference type="FunFam" id="2.130.10.10:FF:002440">
    <property type="entry name" value="Subunit of the mRNA cleavage and polyadenylation factor, putative"/>
    <property type="match status" value="1"/>
</dbReference>
<dbReference type="Gene3D" id="2.130.10.10">
    <property type="entry name" value="YVTN repeat-like/Quinoprotein amine dehydrogenase"/>
    <property type="match status" value="3"/>
</dbReference>
<dbReference type="InterPro" id="IPR018846">
    <property type="entry name" value="Beta-prop_RSE1/DDB1/CPSF1_1st"/>
</dbReference>
<dbReference type="InterPro" id="IPR004871">
    <property type="entry name" value="Cleavage/polyA-sp_fac_asu_C"/>
</dbReference>
<dbReference type="InterPro" id="IPR050358">
    <property type="entry name" value="RSE1/DDB1/CFT1/CPSF1"/>
</dbReference>
<dbReference type="InterPro" id="IPR015943">
    <property type="entry name" value="WD40/YVTN_repeat-like_dom_sf"/>
</dbReference>
<dbReference type="PANTHER" id="PTHR10644">
    <property type="entry name" value="DNA REPAIR/RNA PROCESSING CPSF FAMILY"/>
    <property type="match status" value="1"/>
</dbReference>
<dbReference type="Pfam" id="PF10433">
    <property type="entry name" value="Beta-prop_RSE1_1st"/>
    <property type="match status" value="2"/>
</dbReference>
<dbReference type="Pfam" id="PF03178">
    <property type="entry name" value="CPSF_A"/>
    <property type="match status" value="1"/>
</dbReference>
<feature type="chain" id="PRO_0000290625" description="Protein CFT1">
    <location>
        <begin position="1"/>
        <end position="1420"/>
    </location>
</feature>
<feature type="region of interest" description="Disordered" evidence="2">
    <location>
        <begin position="161"/>
        <end position="210"/>
    </location>
</feature>
<feature type="region of interest" description="Disordered" evidence="2">
    <location>
        <begin position="435"/>
        <end position="488"/>
    </location>
</feature>
<feature type="region of interest" description="Disordered" evidence="2">
    <location>
        <begin position="722"/>
        <end position="760"/>
    </location>
</feature>
<feature type="compositionally biased region" description="Acidic residues" evidence="2">
    <location>
        <begin position="161"/>
        <end position="182"/>
    </location>
</feature>
<feature type="compositionally biased region" description="Basic and acidic residues" evidence="2">
    <location>
        <begin position="183"/>
        <end position="204"/>
    </location>
</feature>
<feature type="compositionally biased region" description="Basic and acidic residues" evidence="2">
    <location>
        <begin position="437"/>
        <end position="461"/>
    </location>
</feature>
<feature type="compositionally biased region" description="Acidic residues" evidence="2">
    <location>
        <begin position="462"/>
        <end position="483"/>
    </location>
</feature>
<proteinExistence type="inferred from homology"/>
<organism>
    <name type="scientific">Candida albicans (strain SC5314 / ATCC MYA-2876)</name>
    <name type="common">Yeast</name>
    <dbReference type="NCBI Taxonomy" id="237561"/>
    <lineage>
        <taxon>Eukaryota</taxon>
        <taxon>Fungi</taxon>
        <taxon>Dikarya</taxon>
        <taxon>Ascomycota</taxon>
        <taxon>Saccharomycotina</taxon>
        <taxon>Pichiomycetes</taxon>
        <taxon>Debaryomycetaceae</taxon>
        <taxon>Candida/Lodderomyces clade</taxon>
        <taxon>Candida</taxon>
    </lineage>
</organism>
<reference key="1">
    <citation type="journal article" date="2004" name="Proc. Natl. Acad. Sci. U.S.A.">
        <title>The diploid genome sequence of Candida albicans.</title>
        <authorList>
            <person name="Jones T."/>
            <person name="Federspiel N.A."/>
            <person name="Chibana H."/>
            <person name="Dungan J."/>
            <person name="Kalman S."/>
            <person name="Magee B.B."/>
            <person name="Newport G."/>
            <person name="Thorstenson Y.R."/>
            <person name="Agabian N."/>
            <person name="Magee P.T."/>
            <person name="Davis R.W."/>
            <person name="Scherer S."/>
        </authorList>
    </citation>
    <scope>NUCLEOTIDE SEQUENCE [LARGE SCALE GENOMIC DNA]</scope>
    <source>
        <strain>SC5314 / ATCC MYA-2876</strain>
    </source>
</reference>
<reference key="2">
    <citation type="journal article" date="2007" name="Genome Biol.">
        <title>Assembly of the Candida albicans genome into sixteen supercontigs aligned on the eight chromosomes.</title>
        <authorList>
            <person name="van het Hoog M."/>
            <person name="Rast T.J."/>
            <person name="Martchenko M."/>
            <person name="Grindle S."/>
            <person name="Dignard D."/>
            <person name="Hogues H."/>
            <person name="Cuomo C."/>
            <person name="Berriman M."/>
            <person name="Scherer S."/>
            <person name="Magee B.B."/>
            <person name="Whiteway M."/>
            <person name="Chibana H."/>
            <person name="Nantel A."/>
            <person name="Magee P.T."/>
        </authorList>
    </citation>
    <scope>GENOME REANNOTATION</scope>
    <source>
        <strain>SC5314 / ATCC MYA-2876</strain>
    </source>
</reference>
<reference key="3">
    <citation type="journal article" date="2013" name="Genome Biol.">
        <title>Assembly of a phased diploid Candida albicans genome facilitates allele-specific measurements and provides a simple model for repeat and indel structure.</title>
        <authorList>
            <person name="Muzzey D."/>
            <person name="Schwartz K."/>
            <person name="Weissman J.S."/>
            <person name="Sherlock G."/>
        </authorList>
    </citation>
    <scope>NUCLEOTIDE SEQUENCE [LARGE SCALE GENOMIC DNA]</scope>
    <scope>GENOME REANNOTATION</scope>
    <source>
        <strain>SC5314 / ATCC MYA-2876</strain>
    </source>
</reference>
<comment type="function">
    <text evidence="1">RNA-binding component of the cleavage and polyadenylation factor (CPF) complex, which plays a key role in polyadenylation-dependent pre-mRNA 3'-end formation and cooperates with cleavage factors including the CFIA complex and NAB4/CFIB. Involved in poly(A) site recognition. May be involved in coupling transcription termination and mRNA 3'-end formation (By similarity).</text>
</comment>
<comment type="subcellular location">
    <subcellularLocation>
        <location evidence="1">Nucleus</location>
    </subcellularLocation>
</comment>
<comment type="similarity">
    <text evidence="3">Belongs to the CFT1 family.</text>
</comment>
<keyword id="KW-0507">mRNA processing</keyword>
<keyword id="KW-0539">Nucleus</keyword>
<keyword id="KW-1185">Reference proteome</keyword>
<keyword id="KW-0694">RNA-binding</keyword>
<sequence length="1420" mass="161940">MDAYREFIDPSKVNNCVGCNFISSTKKNLIVGKGSLLQIFETIQLKQSTINKPQYRLKLIDQFKLQGTITDLKSIRTIENPNLDYLMVSTKYAKFSIIKWDHHLNTIATVSLHYYEHCIQNSTFEKLAVSELILEPTYNSVSCLRFKNLLCFLPFEVIEDDEDEEEEEEEDEEDEDEGEENIDDTKEKKDKKQSKTDTIEEDKNSTTTNQEPRLFYDSSFIIDATTLDSSIDTVVDMQFLHNYREPTIAVLSSKQEVWAGNLIKSKDNIQFQVLTLDLNLKSTISVFKIDNLPYEIDRIIPLPSPLNGTLLVGCNELIHVDNGGVLKRIAVNKFTRLITASFKSFQDQSDLNLKLENCSVVPIPDDHRVLLILQTGEFYFINFELDGKSIKRIHIDNVDKKTYDKIQLNHPGEVAILDKNMLFIANSNGNSPLIQVRYRDSSKTSDTKESKLNKIEEKEDNKDDDDNDDDDEDDLYKEEEEEETQKTISKSHIEFLYHDELINNGPSSTFTLGICSKEKFKCNLPNPNYNEVSILSNAGTDSQTKLNIITPTIQPSISSSLTFSQVNRMWNLNQKYLITSDDVNYKSEIFQIEKSYARMKSKHFINNELTINMHELNNGKFILQVTPKQIVLYDNKFKKRFTLNDEIKDDEILSSILRDEFLMIFLASGDVMIFVINTYNESYDKIEIPKLLDDTIITTGYITNSYLLSAVSKNVNLLLDNNTSSNKRKRKHSALSNSEGSKKNTGKSQPSTAAPPPPPKVNKVKTFVLVTGDNRIVAFNRFHGEKCYQLNHVDKFTENLSLGFFDPNQSTVDPFIKQIMLNELGDKFDTKDEYLTILTIGGEIYMYKLYFDGENYFFKKEKDLTITGAPDNAFPYGTSIERRLVYFPNLNGFTSIFVTGVIPYLILKTVHSIPRIFQFSKIAAMSISAFSDSKIKNGLIFLDNQQNARICELPLDFNYEFNLPMKHVDIGESIKSIAYHETSDTVVLSTFKQIPYDCLDEEGKPIAGIIKDIKDTPAMSFKGSIKLVSPYNWTVIETIELEDNEVGMTLKSMILDVGSESGSTLGSDPNSLIKKYNKKKREYIVIGIGKYRMEDLAANGIFKIYEIIDIIPEPGKPETNHKFKEIFKEETRGAITSICELSGRFLVSQGQKVIVRDLQDDGTVPVAFLDTPVYVSESKSFGNLLILGDPLKGCWLVGFDAEPFRMIMLGKDTQHISVECADFIINDDEIFVLVADNNNVLHLLNYDPDDPQSINGTKLLTKASFELNSTISCLRSLPLIDIEESVQTDALTNIAVPPPLPPNTTSNYFQVIGSTQDGSFFNVFPINEAAYRRMYILQQQLIDKEFHYCGLNPRLNRIGSIKLQNNETNTKPILDYDLIRRFTKLSDDRKRNLANKVSGKGIYQDIWKDIIRFEHTLNDL</sequence>
<protein>
    <recommendedName>
        <fullName>Protein CFT1</fullName>
    </recommendedName>
    <alternativeName>
        <fullName>Cleavage factor two protein 1</fullName>
    </alternativeName>
</protein>
<evidence type="ECO:0000250" key="1"/>
<evidence type="ECO:0000256" key="2">
    <source>
        <dbReference type="SAM" id="MobiDB-lite"/>
    </source>
</evidence>
<evidence type="ECO:0000305" key="3"/>
<accession>Q5AFT3</accession>
<accession>A0A1D8PLK6</accession>
<accession>Q5AF46</accession>
<accession>Q5AF47</accession>
<accession>Q5AF48</accession>
<name>CFT1_CANAL</name>